<keyword id="KW-0030">Aminoacyl-tRNA synthetase</keyword>
<keyword id="KW-0067">ATP-binding</keyword>
<keyword id="KW-0963">Cytoplasm</keyword>
<keyword id="KW-0436">Ligase</keyword>
<keyword id="KW-0479">Metal-binding</keyword>
<keyword id="KW-0547">Nucleotide-binding</keyword>
<keyword id="KW-0648">Protein biosynthesis</keyword>
<keyword id="KW-1185">Reference proteome</keyword>
<keyword id="KW-0694">RNA-binding</keyword>
<keyword id="KW-0820">tRNA-binding</keyword>
<keyword id="KW-0862">Zinc</keyword>
<comment type="function">
    <text evidence="1">Catalyzes the attachment of alanine to tRNA(Ala) in a two-step reaction: alanine is first activated by ATP to form Ala-AMP and then transferred to the acceptor end of tRNA(Ala). Also edits incorrectly charged Ser-tRNA(Ala) and Gly-tRNA(Ala) via its editing domain.</text>
</comment>
<comment type="catalytic activity">
    <reaction evidence="1">
        <text>tRNA(Ala) + L-alanine + ATP = L-alanyl-tRNA(Ala) + AMP + diphosphate</text>
        <dbReference type="Rhea" id="RHEA:12540"/>
        <dbReference type="Rhea" id="RHEA-COMP:9657"/>
        <dbReference type="Rhea" id="RHEA-COMP:9923"/>
        <dbReference type="ChEBI" id="CHEBI:30616"/>
        <dbReference type="ChEBI" id="CHEBI:33019"/>
        <dbReference type="ChEBI" id="CHEBI:57972"/>
        <dbReference type="ChEBI" id="CHEBI:78442"/>
        <dbReference type="ChEBI" id="CHEBI:78497"/>
        <dbReference type="ChEBI" id="CHEBI:456215"/>
        <dbReference type="EC" id="6.1.1.7"/>
    </reaction>
</comment>
<comment type="cofactor">
    <cofactor evidence="1">
        <name>Zn(2+)</name>
        <dbReference type="ChEBI" id="CHEBI:29105"/>
    </cofactor>
    <text evidence="1">Binds 1 zinc ion per subunit.</text>
</comment>
<comment type="subcellular location">
    <subcellularLocation>
        <location evidence="1">Cytoplasm</location>
    </subcellularLocation>
</comment>
<comment type="domain">
    <text evidence="1">Consists of three domains; the N-terminal catalytic domain, the editing domain and the C-terminal C-Ala domain. The editing domain removes incorrectly charged amino acids, while the C-Ala domain, along with tRNA(Ala), serves as a bridge to cooperatively bring together the editing and aminoacylation centers thus stimulating deacylation of misacylated tRNAs.</text>
</comment>
<comment type="similarity">
    <text evidence="1">Belongs to the class-II aminoacyl-tRNA synthetase family.</text>
</comment>
<accession>Q2IG40</accession>
<protein>
    <recommendedName>
        <fullName evidence="1">Alanine--tRNA ligase</fullName>
        <ecNumber evidence="1">6.1.1.7</ecNumber>
    </recommendedName>
    <alternativeName>
        <fullName evidence="1">Alanyl-tRNA synthetase</fullName>
        <shortName evidence="1">AlaRS</shortName>
    </alternativeName>
</protein>
<proteinExistence type="inferred from homology"/>
<name>SYA_ANADE</name>
<sequence>MKTPTAAEIRELFQRYFEEHGHRRVASSSLVPQNDPTLLFTNAGMVQFKDVFTGRERRDYSRATTAQKCVRAGGKHNDLENVGFTARHHTFFEMMGNFSFGDYFKADAIAWAWELVTSPAWLGIAKDRLAATVFAGEGTLPWDEEAFELWKAQGVPVERIHKLGAKDNFWAMGDTGPCGPCSELHYFQGNDVPCAEEQAGRKCQGVACDCDRWLEIWNLVFMQFERGQDGGLTPLPKPSIDTGAGLERLAAVAQGKRSNYDTDLFRSIIHAVEGLSDKRYDAASDDGVSMRVIADHARATTFLVGDGVLPSNEGRGYVLRRIMRRAIRHGKRLGLERPFLAAVCGAVIDEMGAAYPETRENRAFIEKVAQQEEESFRRTLDKGLAILEGEMRKLVPDATHDGKPATPAPDRARPIIDGKVAFQLYDTFGFPLDLTRVIAAERGFDVDEQGFDRHMAEQRARSEWKGSGEQGVDDLHKQIAGELGEVKFLGYELPAARAQVKAILANGARVARAGKGDKVEIVTDATPFYGESGGQVGDVGHITGAGLEIRVDDAQRPVPGLVTHVGEVLRGEVAVGDAVELSVDDRRRDLVRANHSATHLLQLALREVLGEHVKQAGSVVAPDYLRFDFSHFQPVTEEELAAVERRVNELVRENAETETAVLKLEEARHAGAMMIFGEKYGDVVRVVRIGPSKELCGGTHVRRSGDIAFFKIGSEESIASGVRRLVAYTGARAVEVQQREAEELRRAAALLKAGALEVSQKIEQTQRRVKDLERALEEARSKAAAAQSGDLAALAKDVGGAKVLAARVEGDGKALRELADKLRDRLGKGVVALGAEQDGKAILLVAVTRDLTARLKAGDLVKEAAKLVGGSGGGKPDMAQAGGSDPAGLEKALEKVAELAARALA</sequence>
<feature type="chain" id="PRO_0000347488" description="Alanine--tRNA ligase">
    <location>
        <begin position="1"/>
        <end position="905"/>
    </location>
</feature>
<feature type="binding site" evidence="1">
    <location>
        <position position="595"/>
    </location>
    <ligand>
        <name>Zn(2+)</name>
        <dbReference type="ChEBI" id="CHEBI:29105"/>
    </ligand>
</feature>
<feature type="binding site" evidence="1">
    <location>
        <position position="599"/>
    </location>
    <ligand>
        <name>Zn(2+)</name>
        <dbReference type="ChEBI" id="CHEBI:29105"/>
    </ligand>
</feature>
<feature type="binding site" evidence="1">
    <location>
        <position position="696"/>
    </location>
    <ligand>
        <name>Zn(2+)</name>
        <dbReference type="ChEBI" id="CHEBI:29105"/>
    </ligand>
</feature>
<feature type="binding site" evidence="1">
    <location>
        <position position="700"/>
    </location>
    <ligand>
        <name>Zn(2+)</name>
        <dbReference type="ChEBI" id="CHEBI:29105"/>
    </ligand>
</feature>
<evidence type="ECO:0000255" key="1">
    <source>
        <dbReference type="HAMAP-Rule" id="MF_00036"/>
    </source>
</evidence>
<gene>
    <name evidence="1" type="primary">alaS</name>
    <name type="ordered locus">Adeh_3784</name>
</gene>
<reference key="1">
    <citation type="submission" date="2006-01" db="EMBL/GenBank/DDBJ databases">
        <title>Complete sequence of Anaeromyxobacter dehalogenans 2CP-C.</title>
        <authorList>
            <person name="Copeland A."/>
            <person name="Lucas S."/>
            <person name="Lapidus A."/>
            <person name="Barry K."/>
            <person name="Detter J.C."/>
            <person name="Glavina T."/>
            <person name="Hammon N."/>
            <person name="Israni S."/>
            <person name="Pitluck S."/>
            <person name="Brettin T."/>
            <person name="Bruce D."/>
            <person name="Han C."/>
            <person name="Tapia R."/>
            <person name="Gilna P."/>
            <person name="Kiss H."/>
            <person name="Schmutz J."/>
            <person name="Larimer F."/>
            <person name="Land M."/>
            <person name="Kyrpides N."/>
            <person name="Anderson I."/>
            <person name="Sanford R.A."/>
            <person name="Ritalahti K.M."/>
            <person name="Thomas H.S."/>
            <person name="Kirby J.R."/>
            <person name="Zhulin I.B."/>
            <person name="Loeffler F.E."/>
            <person name="Richardson P."/>
        </authorList>
    </citation>
    <scope>NUCLEOTIDE SEQUENCE [LARGE SCALE GENOMIC DNA]</scope>
    <source>
        <strain>2CP-C</strain>
    </source>
</reference>
<organism>
    <name type="scientific">Anaeromyxobacter dehalogenans (strain 2CP-C)</name>
    <dbReference type="NCBI Taxonomy" id="290397"/>
    <lineage>
        <taxon>Bacteria</taxon>
        <taxon>Pseudomonadati</taxon>
        <taxon>Myxococcota</taxon>
        <taxon>Myxococcia</taxon>
        <taxon>Myxococcales</taxon>
        <taxon>Cystobacterineae</taxon>
        <taxon>Anaeromyxobacteraceae</taxon>
        <taxon>Anaeromyxobacter</taxon>
    </lineage>
</organism>
<dbReference type="EC" id="6.1.1.7" evidence="1"/>
<dbReference type="EMBL" id="CP000251">
    <property type="protein sequence ID" value="ABC83550.1"/>
    <property type="molecule type" value="Genomic_DNA"/>
</dbReference>
<dbReference type="RefSeq" id="WP_011422832.1">
    <property type="nucleotide sequence ID" value="NC_007760.1"/>
</dbReference>
<dbReference type="SMR" id="Q2IG40"/>
<dbReference type="STRING" id="290397.Adeh_3784"/>
<dbReference type="KEGG" id="ade:Adeh_3784"/>
<dbReference type="eggNOG" id="COG0013">
    <property type="taxonomic scope" value="Bacteria"/>
</dbReference>
<dbReference type="HOGENOM" id="CLU_004485_1_1_7"/>
<dbReference type="OrthoDB" id="9803884at2"/>
<dbReference type="Proteomes" id="UP000001935">
    <property type="component" value="Chromosome"/>
</dbReference>
<dbReference type="GO" id="GO:0005829">
    <property type="term" value="C:cytosol"/>
    <property type="evidence" value="ECO:0007669"/>
    <property type="project" value="TreeGrafter"/>
</dbReference>
<dbReference type="GO" id="GO:0004813">
    <property type="term" value="F:alanine-tRNA ligase activity"/>
    <property type="evidence" value="ECO:0007669"/>
    <property type="project" value="UniProtKB-UniRule"/>
</dbReference>
<dbReference type="GO" id="GO:0002161">
    <property type="term" value="F:aminoacyl-tRNA deacylase activity"/>
    <property type="evidence" value="ECO:0007669"/>
    <property type="project" value="TreeGrafter"/>
</dbReference>
<dbReference type="GO" id="GO:0005524">
    <property type="term" value="F:ATP binding"/>
    <property type="evidence" value="ECO:0007669"/>
    <property type="project" value="UniProtKB-UniRule"/>
</dbReference>
<dbReference type="GO" id="GO:0000049">
    <property type="term" value="F:tRNA binding"/>
    <property type="evidence" value="ECO:0007669"/>
    <property type="project" value="UniProtKB-KW"/>
</dbReference>
<dbReference type="GO" id="GO:0008270">
    <property type="term" value="F:zinc ion binding"/>
    <property type="evidence" value="ECO:0007669"/>
    <property type="project" value="UniProtKB-UniRule"/>
</dbReference>
<dbReference type="GO" id="GO:0006419">
    <property type="term" value="P:alanyl-tRNA aminoacylation"/>
    <property type="evidence" value="ECO:0007669"/>
    <property type="project" value="UniProtKB-UniRule"/>
</dbReference>
<dbReference type="GO" id="GO:0045892">
    <property type="term" value="P:negative regulation of DNA-templated transcription"/>
    <property type="evidence" value="ECO:0007669"/>
    <property type="project" value="TreeGrafter"/>
</dbReference>
<dbReference type="CDD" id="cd00673">
    <property type="entry name" value="AlaRS_core"/>
    <property type="match status" value="1"/>
</dbReference>
<dbReference type="FunFam" id="3.10.310.40:FF:000001">
    <property type="entry name" value="Alanine--tRNA ligase"/>
    <property type="match status" value="1"/>
</dbReference>
<dbReference type="FunFam" id="3.30.54.20:FF:000001">
    <property type="entry name" value="Alanine--tRNA ligase"/>
    <property type="match status" value="1"/>
</dbReference>
<dbReference type="FunFam" id="3.30.930.10:FF:000004">
    <property type="entry name" value="Alanine--tRNA ligase"/>
    <property type="match status" value="1"/>
</dbReference>
<dbReference type="FunFam" id="3.30.980.10:FF:000004">
    <property type="entry name" value="Alanine--tRNA ligase, cytoplasmic"/>
    <property type="match status" value="1"/>
</dbReference>
<dbReference type="Gene3D" id="2.40.30.130">
    <property type="match status" value="1"/>
</dbReference>
<dbReference type="Gene3D" id="3.10.310.40">
    <property type="match status" value="1"/>
</dbReference>
<dbReference type="Gene3D" id="3.30.54.20">
    <property type="match status" value="1"/>
</dbReference>
<dbReference type="Gene3D" id="3.30.930.10">
    <property type="entry name" value="Bira Bifunctional Protein, Domain 2"/>
    <property type="match status" value="1"/>
</dbReference>
<dbReference type="Gene3D" id="3.30.980.10">
    <property type="entry name" value="Threonyl-trna Synthetase, Chain A, domain 2"/>
    <property type="match status" value="1"/>
</dbReference>
<dbReference type="HAMAP" id="MF_00036_B">
    <property type="entry name" value="Ala_tRNA_synth_B"/>
    <property type="match status" value="1"/>
</dbReference>
<dbReference type="InterPro" id="IPR045864">
    <property type="entry name" value="aa-tRNA-synth_II/BPL/LPL"/>
</dbReference>
<dbReference type="InterPro" id="IPR002318">
    <property type="entry name" value="Ala-tRNA-lgiase_IIc"/>
</dbReference>
<dbReference type="InterPro" id="IPR018162">
    <property type="entry name" value="Ala-tRNA-ligase_IIc_anticod-bd"/>
</dbReference>
<dbReference type="InterPro" id="IPR018165">
    <property type="entry name" value="Ala-tRNA-synth_IIc_core"/>
</dbReference>
<dbReference type="InterPro" id="IPR018164">
    <property type="entry name" value="Ala-tRNA-synth_IIc_N"/>
</dbReference>
<dbReference type="InterPro" id="IPR050058">
    <property type="entry name" value="Ala-tRNA_ligase"/>
</dbReference>
<dbReference type="InterPro" id="IPR023033">
    <property type="entry name" value="Ala_tRNA_ligase_euk/bac"/>
</dbReference>
<dbReference type="InterPro" id="IPR003156">
    <property type="entry name" value="DHHA1_dom"/>
</dbReference>
<dbReference type="InterPro" id="IPR018163">
    <property type="entry name" value="Thr/Ala-tRNA-synth_IIc_edit"/>
</dbReference>
<dbReference type="InterPro" id="IPR009000">
    <property type="entry name" value="Transl_B-barrel_sf"/>
</dbReference>
<dbReference type="InterPro" id="IPR012947">
    <property type="entry name" value="tRNA_SAD"/>
</dbReference>
<dbReference type="NCBIfam" id="TIGR00344">
    <property type="entry name" value="alaS"/>
    <property type="match status" value="1"/>
</dbReference>
<dbReference type="PANTHER" id="PTHR11777:SF9">
    <property type="entry name" value="ALANINE--TRNA LIGASE, CYTOPLASMIC"/>
    <property type="match status" value="1"/>
</dbReference>
<dbReference type="PANTHER" id="PTHR11777">
    <property type="entry name" value="ALANYL-TRNA SYNTHETASE"/>
    <property type="match status" value="1"/>
</dbReference>
<dbReference type="Pfam" id="PF02272">
    <property type="entry name" value="DHHA1"/>
    <property type="match status" value="1"/>
</dbReference>
<dbReference type="Pfam" id="PF01411">
    <property type="entry name" value="tRNA-synt_2c"/>
    <property type="match status" value="1"/>
</dbReference>
<dbReference type="Pfam" id="PF07973">
    <property type="entry name" value="tRNA_SAD"/>
    <property type="match status" value="1"/>
</dbReference>
<dbReference type="PRINTS" id="PR00980">
    <property type="entry name" value="TRNASYNTHALA"/>
</dbReference>
<dbReference type="SMART" id="SM00863">
    <property type="entry name" value="tRNA_SAD"/>
    <property type="match status" value="1"/>
</dbReference>
<dbReference type="SUPFAM" id="SSF55681">
    <property type="entry name" value="Class II aaRS and biotin synthetases"/>
    <property type="match status" value="1"/>
</dbReference>
<dbReference type="SUPFAM" id="SSF101353">
    <property type="entry name" value="Putative anticodon-binding domain of alanyl-tRNA synthetase (AlaRS)"/>
    <property type="match status" value="1"/>
</dbReference>
<dbReference type="SUPFAM" id="SSF55186">
    <property type="entry name" value="ThrRS/AlaRS common domain"/>
    <property type="match status" value="1"/>
</dbReference>
<dbReference type="SUPFAM" id="SSF50447">
    <property type="entry name" value="Translation proteins"/>
    <property type="match status" value="1"/>
</dbReference>
<dbReference type="PROSITE" id="PS50860">
    <property type="entry name" value="AA_TRNA_LIGASE_II_ALA"/>
    <property type="match status" value="1"/>
</dbReference>